<keyword id="KW-0903">Direct protein sequencing</keyword>
<keyword id="KW-0520">NAD</keyword>
<keyword id="KW-0560">Oxidoreductase</keyword>
<keyword id="KW-1185">Reference proteome</keyword>
<organism>
    <name type="scientific">Streptantibioticus cattleyicolor (strain ATCC 35852 / DSM 46488 / JCM 4925 / NBRC 14057 / NRRL 8057)</name>
    <name type="common">Streptomyces cattleya</name>
    <dbReference type="NCBI Taxonomy" id="1003195"/>
    <lineage>
        <taxon>Bacteria</taxon>
        <taxon>Bacillati</taxon>
        <taxon>Actinomycetota</taxon>
        <taxon>Actinomycetes</taxon>
        <taxon>Kitasatosporales</taxon>
        <taxon>Streptomycetaceae</taxon>
        <taxon>Streptantibioticus</taxon>
    </lineage>
</organism>
<reference key="1">
    <citation type="journal article" date="2011" name="J. Bacteriol.">
        <title>Complete genome sequence of Streptomyces cattleya NRRL 8057, a producer of antibiotics and fluorometabolites.</title>
        <authorList>
            <person name="Barbe V."/>
            <person name="Bouzon M."/>
            <person name="Mangenot S."/>
            <person name="Badet B."/>
            <person name="Poulain J."/>
            <person name="Segurens B."/>
            <person name="Vallenet D."/>
            <person name="Marliere P."/>
            <person name="Weissenbach J."/>
        </authorList>
    </citation>
    <scope>NUCLEOTIDE SEQUENCE [LARGE SCALE GENOMIC DNA]</scope>
    <source>
        <strain>ATCC 35852 / DSM 46488 / JCM 4925 / NBRC 14057 / NCIMB 11928 / NRRL 8057 / MA-4297</strain>
    </source>
</reference>
<reference key="2">
    <citation type="submission" date="2011-12" db="EMBL/GenBank/DDBJ databases">
        <title>Complete genome sequence of Streptomyces cattleya strain DSM 46488.</title>
        <authorList>
            <person name="Ou H.-Y."/>
            <person name="Li P."/>
            <person name="Zhao C."/>
            <person name="O'Hagan D."/>
            <person name="Deng Z."/>
        </authorList>
    </citation>
    <scope>NUCLEOTIDE SEQUENCE [LARGE SCALE GENOMIC DNA]</scope>
    <source>
        <strain>ATCC 35852 / DSM 46488 / JCM 4925 / NBRC 14057 / NCIMB 11928 / NRRL 8057 / MA-4297</strain>
    </source>
</reference>
<reference key="3">
    <citation type="journal article" date="2001" name="Appl. Environ. Microbiol.">
        <title>Isolation of an aldehyde dehydrogenase involved in the oxidation of fluoroacetaldehyde to fluoroacetate in Streptomyces cattleya.</title>
        <authorList>
            <person name="Murphy C.D."/>
            <person name="Moss S.J."/>
            <person name="O'Hagan D."/>
        </authorList>
    </citation>
    <scope>PROTEIN SEQUENCE OF 2-21</scope>
    <scope>FUNCTION</scope>
    <scope>CATALYTIC ACTIVITY</scope>
    <scope>SUBUNIT</scope>
    <scope>BIOPHYSICOCHEMICAL PROPERTIES</scope>
    <source>
        <strain>ATCC 35852 / DSM 46488 / JCM 4925 / NBRC 14057 / NCIMB 11928 / NRRL 8057 / MA-4297</strain>
    </source>
</reference>
<reference key="4">
    <citation type="journal article" date="2014" name="PLoS ONE">
        <title>Finding sequences for over 270 orphan enzymes.</title>
        <authorList>
            <person name="Shearer A.G."/>
            <person name="Altman T."/>
            <person name="Rhee C.D."/>
        </authorList>
    </citation>
    <scope>IDENTIFICATION</scope>
</reference>
<proteinExistence type="evidence at protein level"/>
<sequence>MTVHQAPGTPGSVISLRPRYDNWIGGDWKAPAEGRYFANPTPVTGEEYTEIARSTAADIDLALDAAHAAAPAWGRTAPAERAAVLGRIADRIEQHLTELAVAEVWDNGKPIREALAADLPLAVDHFRYFAGVLRAQEGSISQLDEDTVAYHFHEPLGVVGQIIPWNFPLLMAVWKLAPALAAGNAVVLKPAEQTPVSILVLMELIADILPPGVINVVNGFGIEAGKPLAINPRIAKVAFTGETTTGRLIMQYASQNLIPVTLELGGKSPNLFFEDVAAARDDFYDKALEGFTMFALNQGEVCTCPSRALIAGGIYDGFLGDALERTRAVKQGNPLDTETMIGAQASNDQLEKILSYIDIGTAEGAKVLTGGERVDLGGSLSGGYYVAPTIFEGDNRMRIFQEEIFGPVVSVTRFDGYDDAISIANDTLYGLGAGVWTRDLSTAYRAGRAIQAGRVWTNCYHAYPAHAAFGGYKNSGIGRETHKMMLDHYQQTKNLLISYSAKGPGLF</sequence>
<dbReference type="EC" id="1.2.1.69"/>
<dbReference type="EMBL" id="CP003219">
    <property type="protein sequence ID" value="AEW93317.1"/>
    <property type="molecule type" value="Genomic_DNA"/>
</dbReference>
<dbReference type="EMBL" id="FQ859185">
    <property type="protein sequence ID" value="CCB73675.1"/>
    <property type="molecule type" value="Genomic_DNA"/>
</dbReference>
<dbReference type="RefSeq" id="WP_014141713.1">
    <property type="nucleotide sequence ID" value="NC_016111.1"/>
</dbReference>
<dbReference type="SMR" id="F8JX40"/>
<dbReference type="STRING" id="1003195.SCATT_09460"/>
<dbReference type="KEGG" id="sct:SCAT_0945"/>
<dbReference type="KEGG" id="scy:SCATT_09460"/>
<dbReference type="PATRIC" id="fig|1003195.11.peg.2533"/>
<dbReference type="eggNOG" id="COG1012">
    <property type="taxonomic scope" value="Bacteria"/>
</dbReference>
<dbReference type="HOGENOM" id="CLU_005391_0_0_11"/>
<dbReference type="OrthoDB" id="6882680at2"/>
<dbReference type="SABIO-RK" id="F8JX40"/>
<dbReference type="Proteomes" id="UP000007842">
    <property type="component" value="Chromosome"/>
</dbReference>
<dbReference type="GO" id="GO:0033723">
    <property type="term" value="F:fluoroacetaldehyde dehydrogenase (NAD+) activity"/>
    <property type="evidence" value="ECO:0000314"/>
    <property type="project" value="UniProtKB"/>
</dbReference>
<dbReference type="GO" id="GO:0051289">
    <property type="term" value="P:protein homotetramerization"/>
    <property type="evidence" value="ECO:0000314"/>
    <property type="project" value="UniProtKB"/>
</dbReference>
<dbReference type="CDD" id="cd07559">
    <property type="entry name" value="ALDH_ACDHII_AcoD-like"/>
    <property type="match status" value="1"/>
</dbReference>
<dbReference type="FunFam" id="3.40.605.10:FF:000001">
    <property type="entry name" value="Aldehyde dehydrogenase 1"/>
    <property type="match status" value="1"/>
</dbReference>
<dbReference type="Gene3D" id="3.40.605.10">
    <property type="entry name" value="Aldehyde Dehydrogenase, Chain A, domain 1"/>
    <property type="match status" value="1"/>
</dbReference>
<dbReference type="Gene3D" id="3.40.309.10">
    <property type="entry name" value="Aldehyde Dehydrogenase, Chain A, domain 2"/>
    <property type="match status" value="1"/>
</dbReference>
<dbReference type="InterPro" id="IPR016161">
    <property type="entry name" value="Ald_DH/histidinol_DH"/>
</dbReference>
<dbReference type="InterPro" id="IPR016163">
    <property type="entry name" value="Ald_DH_C"/>
</dbReference>
<dbReference type="InterPro" id="IPR016160">
    <property type="entry name" value="Ald_DH_CS_CYS"/>
</dbReference>
<dbReference type="InterPro" id="IPR029510">
    <property type="entry name" value="Ald_DH_CS_GLU"/>
</dbReference>
<dbReference type="InterPro" id="IPR016162">
    <property type="entry name" value="Ald_DH_N"/>
</dbReference>
<dbReference type="InterPro" id="IPR015590">
    <property type="entry name" value="Aldehyde_DH_dom"/>
</dbReference>
<dbReference type="PANTHER" id="PTHR43111">
    <property type="entry name" value="ALDEHYDE DEHYDROGENASE B-RELATED"/>
    <property type="match status" value="1"/>
</dbReference>
<dbReference type="PANTHER" id="PTHR43111:SF1">
    <property type="entry name" value="ALDEHYDE DEHYDROGENASE B-RELATED"/>
    <property type="match status" value="1"/>
</dbReference>
<dbReference type="Pfam" id="PF00171">
    <property type="entry name" value="Aldedh"/>
    <property type="match status" value="1"/>
</dbReference>
<dbReference type="SUPFAM" id="SSF53720">
    <property type="entry name" value="ALDH-like"/>
    <property type="match status" value="1"/>
</dbReference>
<dbReference type="PROSITE" id="PS00070">
    <property type="entry name" value="ALDEHYDE_DEHYDR_CYS"/>
    <property type="match status" value="1"/>
</dbReference>
<dbReference type="PROSITE" id="PS00687">
    <property type="entry name" value="ALDEHYDE_DEHYDR_GLU"/>
    <property type="match status" value="1"/>
</dbReference>
<accession>F8JX40</accession>
<accession>G8WN34</accession>
<gene>
    <name type="ordered locus">SCAT_0945</name>
    <name type="ordered locus">SCATT_09460</name>
</gene>
<comment type="function">
    <text evidence="2">Catalyzes the oxidation of fluoroacetaldehyde to fluoroacetate. Has high affinity for fluoroacetate and glycolaldehyde but not for acetaldehyde.</text>
</comment>
<comment type="catalytic activity">
    <reaction evidence="2">
        <text>fluoroacetaldehyde + NAD(+) + H2O = fluoroacetate + NADH + 2 H(+)</text>
        <dbReference type="Rhea" id="RHEA:16677"/>
        <dbReference type="ChEBI" id="CHEBI:14272"/>
        <dbReference type="ChEBI" id="CHEBI:15377"/>
        <dbReference type="ChEBI" id="CHEBI:15378"/>
        <dbReference type="ChEBI" id="CHEBI:18172"/>
        <dbReference type="ChEBI" id="CHEBI:57540"/>
        <dbReference type="ChEBI" id="CHEBI:57945"/>
        <dbReference type="EC" id="1.2.1.69"/>
    </reaction>
</comment>
<comment type="biophysicochemical properties">
    <kinetics>
        <KM evidence="2">80 uM for fluoroacetaldehyde</KM>
        <KM evidence="2">150 uM for glycoaldehyde</KM>
        <KM evidence="2">810 uM for acetaldehyde</KM>
        <KM evidence="2">320 uM for benzaldehyde</KM>
        <Vmax evidence="2">0.143 umol/min/mg enzyme with fluoroacetaldehyde as substrate</Vmax>
        <Vmax evidence="2">0.206 umol/min/mg enzyme with glycoaldehyde as substrate</Vmax>
        <Vmax evidence="2">0.129 umol/min/mg enzyme with acetaldehyde as substrate</Vmax>
        <Vmax evidence="2">0.099 umol/min/mg enzyme with benzaldehyde as substrate</Vmax>
    </kinetics>
</comment>
<comment type="subunit">
    <text evidence="2">Homotetramer.</text>
</comment>
<comment type="similarity">
    <text evidence="3">Belongs to the aldehyde dehydrogenase family.</text>
</comment>
<evidence type="ECO:0000250" key="1"/>
<evidence type="ECO:0000269" key="2">
    <source>
    </source>
</evidence>
<evidence type="ECO:0000305" key="3"/>
<feature type="initiator methionine" description="Removed" evidence="2">
    <location>
        <position position="1"/>
    </location>
</feature>
<feature type="chain" id="PRO_0000430453" description="Fluoroacetaldehyde dehydrogenase">
    <location>
        <begin position="2"/>
        <end position="507"/>
    </location>
</feature>
<feature type="active site" evidence="1">
    <location>
        <position position="263"/>
    </location>
</feature>
<feature type="active site" evidence="1">
    <location>
        <position position="302"/>
    </location>
</feature>
<feature type="binding site" evidence="1">
    <location>
        <begin position="219"/>
        <end position="225"/>
    </location>
    <ligand>
        <name>NAD(+)</name>
        <dbReference type="ChEBI" id="CHEBI:57540"/>
    </ligand>
</feature>
<feature type="sequence conflict" description="In Ref. 3; AA sequence." evidence="3" ref="3">
    <location>
        <begin position="7"/>
        <end position="9"/>
    </location>
</feature>
<feature type="sequence conflict" description="In Ref. 3; AA sequence." evidence="3" ref="3">
    <original>R</original>
    <variation>P</variation>
    <location>
        <position position="19"/>
    </location>
</feature>
<protein>
    <recommendedName>
        <fullName>Fluoroacetaldehyde dehydrogenase</fullName>
        <ecNumber>1.2.1.69</ecNumber>
    </recommendedName>
</protein>
<name>FLUDE_STREN</name>